<sequence>MATVSMRDMLKAGVHFGHQTRYWNPKMKPFIFGARNKVHIINLEKTVPMFNEALAELNKISARKGKILFVGTKRAASEAVKEAANSCDQFFVNHRWLGGMLTNWKTVRQSIKRLKDLETQSQDGTFEKLTKKEALMRTRELEKLENSLGGIKDMGGLPDALFVIDADHEHIAIKEANNLGIPVFAIVDTNSDPDGVDFVIPGNDDAIRAVSLYLGAVAATVREGRSQDLASQAEESFVEAE</sequence>
<accession>P66541</accession>
<accession>Q8XFT5</accession>
<reference key="1">
    <citation type="journal article" date="2001" name="Nature">
        <title>Complete genome sequence of Salmonella enterica serovar Typhimurium LT2.</title>
        <authorList>
            <person name="McClelland M."/>
            <person name="Sanderson K.E."/>
            <person name="Spieth J."/>
            <person name="Clifton S.W."/>
            <person name="Latreille P."/>
            <person name="Courtney L."/>
            <person name="Porwollik S."/>
            <person name="Ali J."/>
            <person name="Dante M."/>
            <person name="Du F."/>
            <person name="Hou S."/>
            <person name="Layman D."/>
            <person name="Leonard S."/>
            <person name="Nguyen C."/>
            <person name="Scott K."/>
            <person name="Holmes A."/>
            <person name="Grewal N."/>
            <person name="Mulvaney E."/>
            <person name="Ryan E."/>
            <person name="Sun H."/>
            <person name="Florea L."/>
            <person name="Miller W."/>
            <person name="Stoneking T."/>
            <person name="Nhan M."/>
            <person name="Waterston R."/>
            <person name="Wilson R.K."/>
        </authorList>
    </citation>
    <scope>NUCLEOTIDE SEQUENCE [LARGE SCALE GENOMIC DNA]</scope>
    <source>
        <strain>LT2 / SGSC1412 / ATCC 700720</strain>
    </source>
</reference>
<keyword id="KW-1185">Reference proteome</keyword>
<keyword id="KW-0687">Ribonucleoprotein</keyword>
<keyword id="KW-0689">Ribosomal protein</keyword>
<protein>
    <recommendedName>
        <fullName evidence="2">Small ribosomal subunit protein uS2</fullName>
    </recommendedName>
    <alternativeName>
        <fullName evidence="3">30S ribosomal protein S2</fullName>
    </alternativeName>
</protein>
<evidence type="ECO:0000250" key="1"/>
<evidence type="ECO:0000255" key="2">
    <source>
        <dbReference type="HAMAP-Rule" id="MF_00291"/>
    </source>
</evidence>
<evidence type="ECO:0000305" key="3"/>
<gene>
    <name evidence="2" type="primary">rpsB</name>
    <name type="ordered locus">STM0216</name>
</gene>
<proteinExistence type="inferred from homology"/>
<name>RS2_SALTY</name>
<feature type="initiator methionine" description="Removed" evidence="1">
    <location>
        <position position="1"/>
    </location>
</feature>
<feature type="chain" id="PRO_0000134231" description="Small ribosomal subunit protein uS2">
    <location>
        <begin position="2"/>
        <end position="241"/>
    </location>
</feature>
<organism>
    <name type="scientific">Salmonella typhimurium (strain LT2 / SGSC1412 / ATCC 700720)</name>
    <dbReference type="NCBI Taxonomy" id="99287"/>
    <lineage>
        <taxon>Bacteria</taxon>
        <taxon>Pseudomonadati</taxon>
        <taxon>Pseudomonadota</taxon>
        <taxon>Gammaproteobacteria</taxon>
        <taxon>Enterobacterales</taxon>
        <taxon>Enterobacteriaceae</taxon>
        <taxon>Salmonella</taxon>
    </lineage>
</organism>
<comment type="similarity">
    <text evidence="2">Belongs to the universal ribosomal protein uS2 family.</text>
</comment>
<dbReference type="EMBL" id="AE006468">
    <property type="protein sequence ID" value="AAL19180.1"/>
    <property type="molecule type" value="Genomic_DNA"/>
</dbReference>
<dbReference type="RefSeq" id="NP_459221.1">
    <property type="nucleotide sequence ID" value="NC_003197.2"/>
</dbReference>
<dbReference type="RefSeq" id="WP_000246886.1">
    <property type="nucleotide sequence ID" value="NC_003197.2"/>
</dbReference>
<dbReference type="SMR" id="P66541"/>
<dbReference type="STRING" id="99287.STM0216"/>
<dbReference type="PaxDb" id="99287-STM0216"/>
<dbReference type="GeneID" id="1251734"/>
<dbReference type="KEGG" id="stm:STM0216"/>
<dbReference type="PATRIC" id="fig|99287.12.peg.229"/>
<dbReference type="HOGENOM" id="CLU_040318_1_0_6"/>
<dbReference type="OMA" id="PYIFMEK"/>
<dbReference type="PhylomeDB" id="P66541"/>
<dbReference type="BioCyc" id="SENT99287:STM0216-MONOMER"/>
<dbReference type="Proteomes" id="UP000001014">
    <property type="component" value="Chromosome"/>
</dbReference>
<dbReference type="GO" id="GO:0022627">
    <property type="term" value="C:cytosolic small ribosomal subunit"/>
    <property type="evidence" value="ECO:0000318"/>
    <property type="project" value="GO_Central"/>
</dbReference>
<dbReference type="GO" id="GO:0003735">
    <property type="term" value="F:structural constituent of ribosome"/>
    <property type="evidence" value="ECO:0000318"/>
    <property type="project" value="GO_Central"/>
</dbReference>
<dbReference type="GO" id="GO:0006412">
    <property type="term" value="P:translation"/>
    <property type="evidence" value="ECO:0007669"/>
    <property type="project" value="UniProtKB-UniRule"/>
</dbReference>
<dbReference type="CDD" id="cd01425">
    <property type="entry name" value="RPS2"/>
    <property type="match status" value="1"/>
</dbReference>
<dbReference type="FunFam" id="1.10.287.610:FF:000001">
    <property type="entry name" value="30S ribosomal protein S2"/>
    <property type="match status" value="1"/>
</dbReference>
<dbReference type="Gene3D" id="3.40.50.10490">
    <property type="entry name" value="Glucose-6-phosphate isomerase like protein, domain 1"/>
    <property type="match status" value="1"/>
</dbReference>
<dbReference type="Gene3D" id="1.10.287.610">
    <property type="entry name" value="Helix hairpin bin"/>
    <property type="match status" value="1"/>
</dbReference>
<dbReference type="HAMAP" id="MF_00291_B">
    <property type="entry name" value="Ribosomal_uS2_B"/>
    <property type="match status" value="1"/>
</dbReference>
<dbReference type="InterPro" id="IPR001865">
    <property type="entry name" value="Ribosomal_uS2"/>
</dbReference>
<dbReference type="InterPro" id="IPR005706">
    <property type="entry name" value="Ribosomal_uS2_bac/mit/plastid"/>
</dbReference>
<dbReference type="InterPro" id="IPR018130">
    <property type="entry name" value="Ribosomal_uS2_CS"/>
</dbReference>
<dbReference type="InterPro" id="IPR023591">
    <property type="entry name" value="Ribosomal_uS2_flav_dom_sf"/>
</dbReference>
<dbReference type="NCBIfam" id="TIGR01011">
    <property type="entry name" value="rpsB_bact"/>
    <property type="match status" value="1"/>
</dbReference>
<dbReference type="PANTHER" id="PTHR12534">
    <property type="entry name" value="30S RIBOSOMAL PROTEIN S2 PROKARYOTIC AND ORGANELLAR"/>
    <property type="match status" value="1"/>
</dbReference>
<dbReference type="PANTHER" id="PTHR12534:SF0">
    <property type="entry name" value="SMALL RIBOSOMAL SUBUNIT PROTEIN US2M"/>
    <property type="match status" value="1"/>
</dbReference>
<dbReference type="Pfam" id="PF00318">
    <property type="entry name" value="Ribosomal_S2"/>
    <property type="match status" value="1"/>
</dbReference>
<dbReference type="PRINTS" id="PR00395">
    <property type="entry name" value="RIBOSOMALS2"/>
</dbReference>
<dbReference type="SUPFAM" id="SSF52313">
    <property type="entry name" value="Ribosomal protein S2"/>
    <property type="match status" value="1"/>
</dbReference>
<dbReference type="PROSITE" id="PS00962">
    <property type="entry name" value="RIBOSOMAL_S2_1"/>
    <property type="match status" value="1"/>
</dbReference>
<dbReference type="PROSITE" id="PS00963">
    <property type="entry name" value="RIBOSOMAL_S2_2"/>
    <property type="match status" value="1"/>
</dbReference>